<name>NOC4L_MOUSE</name>
<gene>
    <name type="primary">Noc4l</name>
</gene>
<dbReference type="EMBL" id="AK052601">
    <property type="protein sequence ID" value="BAC35057.1"/>
    <property type="molecule type" value="mRNA"/>
</dbReference>
<dbReference type="EMBL" id="BC024616">
    <property type="protein sequence ID" value="AAH24616.1"/>
    <property type="molecule type" value="mRNA"/>
</dbReference>
<dbReference type="CCDS" id="CCDS19527.1"/>
<dbReference type="RefSeq" id="NP_705798.2">
    <property type="nucleotide sequence ID" value="NM_153570.2"/>
</dbReference>
<dbReference type="SMR" id="Q8BHY2"/>
<dbReference type="BioGRID" id="221496">
    <property type="interactions" value="4"/>
</dbReference>
<dbReference type="FunCoup" id="Q8BHY2">
    <property type="interactions" value="2354"/>
</dbReference>
<dbReference type="STRING" id="10090.ENSMUSP00000038263"/>
<dbReference type="GlyGen" id="Q8BHY2">
    <property type="glycosylation" value="1 site, 1 O-linked glycan (1 site)"/>
</dbReference>
<dbReference type="PhosphoSitePlus" id="Q8BHY2"/>
<dbReference type="PaxDb" id="10090-ENSMUSP00000038263"/>
<dbReference type="PeptideAtlas" id="Q8BHY2"/>
<dbReference type="ProteomicsDB" id="293868"/>
<dbReference type="Pumba" id="Q8BHY2"/>
<dbReference type="Antibodypedia" id="19475">
    <property type="antibodies" value="94 antibodies from 28 providers"/>
</dbReference>
<dbReference type="DNASU" id="100608"/>
<dbReference type="Ensembl" id="ENSMUST00000042147.6">
    <property type="protein sequence ID" value="ENSMUSP00000038263.6"/>
    <property type="gene ID" value="ENSMUSG00000033294.12"/>
</dbReference>
<dbReference type="GeneID" id="100608"/>
<dbReference type="KEGG" id="mmu:100608"/>
<dbReference type="UCSC" id="uc008yrd.1">
    <property type="organism name" value="mouse"/>
</dbReference>
<dbReference type="AGR" id="MGI:2140843"/>
<dbReference type="CTD" id="79050"/>
<dbReference type="MGI" id="MGI:2140843">
    <property type="gene designation" value="Noc4l"/>
</dbReference>
<dbReference type="VEuPathDB" id="HostDB:ENSMUSG00000033294"/>
<dbReference type="eggNOG" id="KOG2154">
    <property type="taxonomic scope" value="Eukaryota"/>
</dbReference>
<dbReference type="GeneTree" id="ENSGT00390000016776"/>
<dbReference type="HOGENOM" id="CLU_015945_3_0_1"/>
<dbReference type="InParanoid" id="Q8BHY2"/>
<dbReference type="OMA" id="YYNNIVT"/>
<dbReference type="OrthoDB" id="10263185at2759"/>
<dbReference type="PhylomeDB" id="Q8BHY2"/>
<dbReference type="TreeFam" id="TF105812"/>
<dbReference type="Reactome" id="R-MMU-6791226">
    <property type="pathway name" value="Major pathway of rRNA processing in the nucleolus and cytosol"/>
</dbReference>
<dbReference type="BioGRID-ORCS" id="100608">
    <property type="hits" value="22 hits in 82 CRISPR screens"/>
</dbReference>
<dbReference type="PRO" id="PR:Q8BHY2"/>
<dbReference type="Proteomes" id="UP000000589">
    <property type="component" value="Chromosome 5"/>
</dbReference>
<dbReference type="RNAct" id="Q8BHY2">
    <property type="molecule type" value="protein"/>
</dbReference>
<dbReference type="Bgee" id="ENSMUSG00000033294">
    <property type="expression patterns" value="Expressed in primary oocyte and 271 other cell types or tissues"/>
</dbReference>
<dbReference type="GO" id="GO:0031965">
    <property type="term" value="C:nuclear membrane"/>
    <property type="evidence" value="ECO:0007669"/>
    <property type="project" value="UniProtKB-SubCell"/>
</dbReference>
<dbReference type="GO" id="GO:0005730">
    <property type="term" value="C:nucleolus"/>
    <property type="evidence" value="ECO:0007669"/>
    <property type="project" value="UniProtKB-SubCell"/>
</dbReference>
<dbReference type="GO" id="GO:0005654">
    <property type="term" value="C:nucleoplasm"/>
    <property type="evidence" value="ECO:0007669"/>
    <property type="project" value="Ensembl"/>
</dbReference>
<dbReference type="GO" id="GO:0042254">
    <property type="term" value="P:ribosome biogenesis"/>
    <property type="evidence" value="ECO:0007669"/>
    <property type="project" value="InterPro"/>
</dbReference>
<dbReference type="InterPro" id="IPR016024">
    <property type="entry name" value="ARM-type_fold"/>
</dbReference>
<dbReference type="InterPro" id="IPR005612">
    <property type="entry name" value="CCAAT-binding_factor"/>
</dbReference>
<dbReference type="InterPro" id="IPR027193">
    <property type="entry name" value="Noc4"/>
</dbReference>
<dbReference type="PANTHER" id="PTHR12455">
    <property type="entry name" value="NUCLEOLAR COMPLEX PROTEIN 4"/>
    <property type="match status" value="1"/>
</dbReference>
<dbReference type="PANTHER" id="PTHR12455:SF0">
    <property type="entry name" value="NUCLEOLAR COMPLEX PROTEIN 4 HOMOLOG"/>
    <property type="match status" value="1"/>
</dbReference>
<dbReference type="Pfam" id="PF03914">
    <property type="entry name" value="CBF"/>
    <property type="match status" value="1"/>
</dbReference>
<dbReference type="SUPFAM" id="SSF48371">
    <property type="entry name" value="ARM repeat"/>
    <property type="match status" value="1"/>
</dbReference>
<comment type="subcellular location">
    <subcellularLocation>
        <location evidence="1">Nucleus membrane</location>
        <topology evidence="2">Multi-pass membrane protein</topology>
    </subcellularLocation>
    <subcellularLocation>
        <location evidence="1">Nucleus</location>
        <location evidence="1">Nucleolus</location>
    </subcellularLocation>
</comment>
<comment type="similarity">
    <text evidence="3">Belongs to the CBF/MAK21 family.</text>
</comment>
<reference key="1">
    <citation type="journal article" date="2005" name="Science">
        <title>The transcriptional landscape of the mammalian genome.</title>
        <authorList>
            <person name="Carninci P."/>
            <person name="Kasukawa T."/>
            <person name="Katayama S."/>
            <person name="Gough J."/>
            <person name="Frith M.C."/>
            <person name="Maeda N."/>
            <person name="Oyama R."/>
            <person name="Ravasi T."/>
            <person name="Lenhard B."/>
            <person name="Wells C."/>
            <person name="Kodzius R."/>
            <person name="Shimokawa K."/>
            <person name="Bajic V.B."/>
            <person name="Brenner S.E."/>
            <person name="Batalov S."/>
            <person name="Forrest A.R."/>
            <person name="Zavolan M."/>
            <person name="Davis M.J."/>
            <person name="Wilming L.G."/>
            <person name="Aidinis V."/>
            <person name="Allen J.E."/>
            <person name="Ambesi-Impiombato A."/>
            <person name="Apweiler R."/>
            <person name="Aturaliya R.N."/>
            <person name="Bailey T.L."/>
            <person name="Bansal M."/>
            <person name="Baxter L."/>
            <person name="Beisel K.W."/>
            <person name="Bersano T."/>
            <person name="Bono H."/>
            <person name="Chalk A.M."/>
            <person name="Chiu K.P."/>
            <person name="Choudhary V."/>
            <person name="Christoffels A."/>
            <person name="Clutterbuck D.R."/>
            <person name="Crowe M.L."/>
            <person name="Dalla E."/>
            <person name="Dalrymple B.P."/>
            <person name="de Bono B."/>
            <person name="Della Gatta G."/>
            <person name="di Bernardo D."/>
            <person name="Down T."/>
            <person name="Engstrom P."/>
            <person name="Fagiolini M."/>
            <person name="Faulkner G."/>
            <person name="Fletcher C.F."/>
            <person name="Fukushima T."/>
            <person name="Furuno M."/>
            <person name="Futaki S."/>
            <person name="Gariboldi M."/>
            <person name="Georgii-Hemming P."/>
            <person name="Gingeras T.R."/>
            <person name="Gojobori T."/>
            <person name="Green R.E."/>
            <person name="Gustincich S."/>
            <person name="Harbers M."/>
            <person name="Hayashi Y."/>
            <person name="Hensch T.K."/>
            <person name="Hirokawa N."/>
            <person name="Hill D."/>
            <person name="Huminiecki L."/>
            <person name="Iacono M."/>
            <person name="Ikeo K."/>
            <person name="Iwama A."/>
            <person name="Ishikawa T."/>
            <person name="Jakt M."/>
            <person name="Kanapin A."/>
            <person name="Katoh M."/>
            <person name="Kawasawa Y."/>
            <person name="Kelso J."/>
            <person name="Kitamura H."/>
            <person name="Kitano H."/>
            <person name="Kollias G."/>
            <person name="Krishnan S.P."/>
            <person name="Kruger A."/>
            <person name="Kummerfeld S.K."/>
            <person name="Kurochkin I.V."/>
            <person name="Lareau L.F."/>
            <person name="Lazarevic D."/>
            <person name="Lipovich L."/>
            <person name="Liu J."/>
            <person name="Liuni S."/>
            <person name="McWilliam S."/>
            <person name="Madan Babu M."/>
            <person name="Madera M."/>
            <person name="Marchionni L."/>
            <person name="Matsuda H."/>
            <person name="Matsuzawa S."/>
            <person name="Miki H."/>
            <person name="Mignone F."/>
            <person name="Miyake S."/>
            <person name="Morris K."/>
            <person name="Mottagui-Tabar S."/>
            <person name="Mulder N."/>
            <person name="Nakano N."/>
            <person name="Nakauchi H."/>
            <person name="Ng P."/>
            <person name="Nilsson R."/>
            <person name="Nishiguchi S."/>
            <person name="Nishikawa S."/>
            <person name="Nori F."/>
            <person name="Ohara O."/>
            <person name="Okazaki Y."/>
            <person name="Orlando V."/>
            <person name="Pang K.C."/>
            <person name="Pavan W.J."/>
            <person name="Pavesi G."/>
            <person name="Pesole G."/>
            <person name="Petrovsky N."/>
            <person name="Piazza S."/>
            <person name="Reed J."/>
            <person name="Reid J.F."/>
            <person name="Ring B.Z."/>
            <person name="Ringwald M."/>
            <person name="Rost B."/>
            <person name="Ruan Y."/>
            <person name="Salzberg S.L."/>
            <person name="Sandelin A."/>
            <person name="Schneider C."/>
            <person name="Schoenbach C."/>
            <person name="Sekiguchi K."/>
            <person name="Semple C.A."/>
            <person name="Seno S."/>
            <person name="Sessa L."/>
            <person name="Sheng Y."/>
            <person name="Shibata Y."/>
            <person name="Shimada H."/>
            <person name="Shimada K."/>
            <person name="Silva D."/>
            <person name="Sinclair B."/>
            <person name="Sperling S."/>
            <person name="Stupka E."/>
            <person name="Sugiura K."/>
            <person name="Sultana R."/>
            <person name="Takenaka Y."/>
            <person name="Taki K."/>
            <person name="Tammoja K."/>
            <person name="Tan S.L."/>
            <person name="Tang S."/>
            <person name="Taylor M.S."/>
            <person name="Tegner J."/>
            <person name="Teichmann S.A."/>
            <person name="Ueda H.R."/>
            <person name="van Nimwegen E."/>
            <person name="Verardo R."/>
            <person name="Wei C.L."/>
            <person name="Yagi K."/>
            <person name="Yamanishi H."/>
            <person name="Zabarovsky E."/>
            <person name="Zhu S."/>
            <person name="Zimmer A."/>
            <person name="Hide W."/>
            <person name="Bult C."/>
            <person name="Grimmond S.M."/>
            <person name="Teasdale R.D."/>
            <person name="Liu E.T."/>
            <person name="Brusic V."/>
            <person name="Quackenbush J."/>
            <person name="Wahlestedt C."/>
            <person name="Mattick J.S."/>
            <person name="Hume D.A."/>
            <person name="Kai C."/>
            <person name="Sasaki D."/>
            <person name="Tomaru Y."/>
            <person name="Fukuda S."/>
            <person name="Kanamori-Katayama M."/>
            <person name="Suzuki M."/>
            <person name="Aoki J."/>
            <person name="Arakawa T."/>
            <person name="Iida J."/>
            <person name="Imamura K."/>
            <person name="Itoh M."/>
            <person name="Kato T."/>
            <person name="Kawaji H."/>
            <person name="Kawagashira N."/>
            <person name="Kawashima T."/>
            <person name="Kojima M."/>
            <person name="Kondo S."/>
            <person name="Konno H."/>
            <person name="Nakano K."/>
            <person name="Ninomiya N."/>
            <person name="Nishio T."/>
            <person name="Okada M."/>
            <person name="Plessy C."/>
            <person name="Shibata K."/>
            <person name="Shiraki T."/>
            <person name="Suzuki S."/>
            <person name="Tagami M."/>
            <person name="Waki K."/>
            <person name="Watahiki A."/>
            <person name="Okamura-Oho Y."/>
            <person name="Suzuki H."/>
            <person name="Kawai J."/>
            <person name="Hayashizaki Y."/>
        </authorList>
    </citation>
    <scope>NUCLEOTIDE SEQUENCE [LARGE SCALE MRNA]</scope>
    <source>
        <strain>C57BL/6J</strain>
        <tissue>Kidney</tissue>
    </source>
</reference>
<reference key="2">
    <citation type="journal article" date="2004" name="Genome Res.">
        <title>The status, quality, and expansion of the NIH full-length cDNA project: the Mammalian Gene Collection (MGC).</title>
        <authorList>
            <consortium name="The MGC Project Team"/>
        </authorList>
    </citation>
    <scope>NUCLEOTIDE SEQUENCE [LARGE SCALE MRNA]</scope>
    <source>
        <strain>FVB/N</strain>
        <tissue>Colon</tissue>
    </source>
</reference>
<feature type="chain" id="PRO_0000173485" description="Nucleolar complex protein 4 homolog">
    <location>
        <begin position="1"/>
        <end position="516"/>
    </location>
</feature>
<feature type="transmembrane region" description="Helical" evidence="2">
    <location>
        <begin position="296"/>
        <end position="316"/>
    </location>
</feature>
<feature type="transmembrane region" description="Helical" evidence="2">
    <location>
        <begin position="347"/>
        <end position="367"/>
    </location>
</feature>
<feature type="transmembrane region" description="Helical" evidence="2">
    <location>
        <begin position="375"/>
        <end position="395"/>
    </location>
</feature>
<feature type="sequence conflict" description="In Ref. 2; AAH24616." evidence="3" ref="2">
    <original>R</original>
    <variation>H</variation>
    <location>
        <position position="407"/>
    </location>
</feature>
<proteinExistence type="evidence at transcript level"/>
<protein>
    <recommendedName>
        <fullName>Nucleolar complex protein 4 homolog</fullName>
        <shortName>NOC4 protein homolog</shortName>
    </recommendedName>
    <alternativeName>
        <fullName>NOC4-like protein</fullName>
    </alternativeName>
    <alternativeName>
        <fullName>Nucleolar complex-associated protein 4-like protein</fullName>
    </alternativeName>
</protein>
<keyword id="KW-0472">Membrane</keyword>
<keyword id="KW-0539">Nucleus</keyword>
<keyword id="KW-1185">Reference proteome</keyword>
<keyword id="KW-0812">Transmembrane</keyword>
<keyword id="KW-1133">Transmembrane helix</keyword>
<organism>
    <name type="scientific">Mus musculus</name>
    <name type="common">Mouse</name>
    <dbReference type="NCBI Taxonomy" id="10090"/>
    <lineage>
        <taxon>Eukaryota</taxon>
        <taxon>Metazoa</taxon>
        <taxon>Chordata</taxon>
        <taxon>Craniata</taxon>
        <taxon>Vertebrata</taxon>
        <taxon>Euteleostomi</taxon>
        <taxon>Mammalia</taxon>
        <taxon>Eutheria</taxon>
        <taxon>Euarchontoglires</taxon>
        <taxon>Glires</taxon>
        <taxon>Rodentia</taxon>
        <taxon>Myomorpha</taxon>
        <taxon>Muroidea</taxon>
        <taxon>Muridae</taxon>
        <taxon>Murinae</taxon>
        <taxon>Mus</taxon>
        <taxon>Mus</taxon>
    </lineage>
</organism>
<accession>Q8BHY2</accession>
<accession>Q8R1F7</accession>
<evidence type="ECO:0000250" key="1">
    <source>
        <dbReference type="UniProtKB" id="Q9BVI4"/>
    </source>
</evidence>
<evidence type="ECO:0000255" key="2"/>
<evidence type="ECO:0000305" key="3"/>
<sequence length="516" mass="58676">MERHPASASSRQELGRLLEAVLTSRGQANAVFDILAVLQSEEPEEIEEGVRTCSRLFGTLLEREELFVGSLPSEDTALAGSQGATYKYKVWIRHRYHSCCNRLEELLAHPTFQVKELALKTLMKFVQLEGAKPLEKPQWESHYLFPRTLFRAVVGGLLTPEDDHSLLISHFCEYLEYDDIRYHTMQVATSIMARATSQQPEVSLTLWNNAFTLLSAVSLPLQECELTNFYVKHAQTSDKWKVVHLKEHKKAFQEMWLGFLKHKLPLSLYKKVLVAMHDSILPHLAQPTLMIDFLTSACDVGGAISLLALNGLFILIHKHNLEYPDFYQKLYGLLDPSIFHVKYRARFFHLADLFLSSSHLPAYLVAAFAKRLARLALTAPPEALLMVLPLICNLLRRHPACRVMVHRPQGPELDADPYDPTEKDPARSRALESCLWELQTLQQHYHPEVSKAASVINQVLSVPEVSIAPLLELTAYEIFEQDLKKKMPESVPLEFIPAKGLLGRQDDLCTQFFCLS</sequence>